<comment type="function">
    <text evidence="1">Part of the outer membrane protein assembly complex, which is involved in assembly and insertion of beta-barrel proteins into the outer membrane. Constitutes, with BamD, the core component of the assembly machinery.</text>
</comment>
<comment type="subunit">
    <text evidence="1">Part of the Bam complex, which is composed of the outer membrane protein BamA, and four lipoproteins BamB, BamC, BamD and BamE.</text>
</comment>
<comment type="subcellular location">
    <subcellularLocation>
        <location evidence="1">Cell outer membrane</location>
    </subcellularLocation>
</comment>
<comment type="similarity">
    <text evidence="1">Belongs to the BamA family.</text>
</comment>
<accession>B1JQG8</accession>
<name>BAMA_YERPY</name>
<feature type="signal peptide" evidence="1">
    <location>
        <begin position="1"/>
        <end position="20"/>
    </location>
</feature>
<feature type="chain" id="PRO_5000316123" description="Outer membrane protein assembly factor BamA">
    <location>
        <begin position="21"/>
        <end position="795"/>
    </location>
</feature>
<feature type="domain" description="POTRA 1" evidence="2">
    <location>
        <begin position="24"/>
        <end position="91"/>
    </location>
</feature>
<feature type="domain" description="POTRA 2" evidence="2">
    <location>
        <begin position="92"/>
        <end position="172"/>
    </location>
</feature>
<feature type="domain" description="POTRA 3" evidence="2">
    <location>
        <begin position="175"/>
        <end position="263"/>
    </location>
</feature>
<feature type="domain" description="POTRA 4" evidence="2">
    <location>
        <begin position="266"/>
        <end position="344"/>
    </location>
</feature>
<feature type="domain" description="POTRA 5" evidence="2">
    <location>
        <begin position="347"/>
        <end position="421"/>
    </location>
</feature>
<protein>
    <recommendedName>
        <fullName evidence="1">Outer membrane protein assembly factor BamA</fullName>
    </recommendedName>
</protein>
<dbReference type="EMBL" id="CP000950">
    <property type="protein sequence ID" value="ACA67375.1"/>
    <property type="molecule type" value="Genomic_DNA"/>
</dbReference>
<dbReference type="RefSeq" id="WP_002212139.1">
    <property type="nucleotide sequence ID" value="NZ_CP009792.1"/>
</dbReference>
<dbReference type="SMR" id="B1JQG8"/>
<dbReference type="GeneID" id="57977509"/>
<dbReference type="KEGG" id="ypy:YPK_1074"/>
<dbReference type="PATRIC" id="fig|502800.11.peg.1706"/>
<dbReference type="GO" id="GO:1990063">
    <property type="term" value="C:Bam protein complex"/>
    <property type="evidence" value="ECO:0007669"/>
    <property type="project" value="TreeGrafter"/>
</dbReference>
<dbReference type="GO" id="GO:0043165">
    <property type="term" value="P:Gram-negative-bacterium-type cell outer membrane assembly"/>
    <property type="evidence" value="ECO:0007669"/>
    <property type="project" value="UniProtKB-UniRule"/>
</dbReference>
<dbReference type="GO" id="GO:0051205">
    <property type="term" value="P:protein insertion into membrane"/>
    <property type="evidence" value="ECO:0007669"/>
    <property type="project" value="UniProtKB-UniRule"/>
</dbReference>
<dbReference type="FunFam" id="2.40.160.50:FF:000001">
    <property type="entry name" value="Outer membrane protein assembly factor BamA"/>
    <property type="match status" value="1"/>
</dbReference>
<dbReference type="FunFam" id="3.10.20.310:FF:000001">
    <property type="entry name" value="Outer membrane protein assembly factor BamA"/>
    <property type="match status" value="1"/>
</dbReference>
<dbReference type="FunFam" id="3.10.20.310:FF:000002">
    <property type="entry name" value="Outer membrane protein assembly factor BamA"/>
    <property type="match status" value="1"/>
</dbReference>
<dbReference type="FunFam" id="3.10.20.310:FF:000003">
    <property type="entry name" value="Outer membrane protein assembly factor BamA"/>
    <property type="match status" value="1"/>
</dbReference>
<dbReference type="FunFam" id="3.10.20.310:FF:000004">
    <property type="entry name" value="Outer membrane protein assembly factor BamA"/>
    <property type="match status" value="1"/>
</dbReference>
<dbReference type="FunFam" id="3.10.20.310:FF:000005">
    <property type="entry name" value="Outer membrane protein assembly factor BamA"/>
    <property type="match status" value="1"/>
</dbReference>
<dbReference type="Gene3D" id="3.10.20.310">
    <property type="entry name" value="membrane protein fhac"/>
    <property type="match status" value="5"/>
</dbReference>
<dbReference type="Gene3D" id="2.40.160.50">
    <property type="entry name" value="membrane protein fhac: a member of the omp85/tpsb transporter family"/>
    <property type="match status" value="1"/>
</dbReference>
<dbReference type="HAMAP" id="MF_01430">
    <property type="entry name" value="OM_assembly_BamA"/>
    <property type="match status" value="1"/>
</dbReference>
<dbReference type="InterPro" id="IPR000184">
    <property type="entry name" value="Bac_surfAg_D15"/>
</dbReference>
<dbReference type="InterPro" id="IPR010827">
    <property type="entry name" value="BamA/TamA_POTRA"/>
</dbReference>
<dbReference type="InterPro" id="IPR039910">
    <property type="entry name" value="D15-like"/>
</dbReference>
<dbReference type="InterPro" id="IPR023707">
    <property type="entry name" value="OM_assembly_BamA"/>
</dbReference>
<dbReference type="InterPro" id="IPR034746">
    <property type="entry name" value="POTRA"/>
</dbReference>
<dbReference type="NCBIfam" id="TIGR03303">
    <property type="entry name" value="OM_YaeT"/>
    <property type="match status" value="1"/>
</dbReference>
<dbReference type="NCBIfam" id="NF008287">
    <property type="entry name" value="PRK11067.1"/>
    <property type="match status" value="1"/>
</dbReference>
<dbReference type="PANTHER" id="PTHR12815:SF23">
    <property type="entry name" value="OUTER MEMBRANE PROTEIN ASSEMBLY FACTOR BAMA"/>
    <property type="match status" value="1"/>
</dbReference>
<dbReference type="PANTHER" id="PTHR12815">
    <property type="entry name" value="SORTING AND ASSEMBLY MACHINERY SAMM50 PROTEIN FAMILY MEMBER"/>
    <property type="match status" value="1"/>
</dbReference>
<dbReference type="Pfam" id="PF01103">
    <property type="entry name" value="Omp85"/>
    <property type="match status" value="1"/>
</dbReference>
<dbReference type="Pfam" id="PF07244">
    <property type="entry name" value="POTRA"/>
    <property type="match status" value="4"/>
</dbReference>
<dbReference type="PIRSF" id="PIRSF006076">
    <property type="entry name" value="OM_assembly_OMP85"/>
    <property type="match status" value="1"/>
</dbReference>
<dbReference type="PROSITE" id="PS51779">
    <property type="entry name" value="POTRA"/>
    <property type="match status" value="5"/>
</dbReference>
<proteinExistence type="inferred from homology"/>
<keyword id="KW-0998">Cell outer membrane</keyword>
<keyword id="KW-0472">Membrane</keyword>
<keyword id="KW-0677">Repeat</keyword>
<keyword id="KW-0732">Signal</keyword>
<keyword id="KW-0812">Transmembrane</keyword>
<keyword id="KW-1134">Transmembrane beta strand</keyword>
<sequence>MAMKKLLIASLLFGSATVYGADGFVVNDIHFEGLQRVAVGAALLNMPVRVGDTVSDDDIGKTIRALFATGNFEDVRVLRDGNTLIVQVKERPTIASITFSGNKAVKEDMLKQNLEASGVRVGEALDRTTISNIEKGLEDFYYSVGKYSASVKAVVTPLPRNRVDLKLVFTEGVSAKIQQINIVGNHSFTTDELISRFQLRDEVPWWNVVGDRKYQKQKLAGDLETLRSFYLDRGYARFNIDSTQVSLTPDKKGIYVTINITEGPQFKLNSVIVSGNLAGHQSEAEKLTKIEPGELFNGSKVTRMEDDIKKMLGRYGYAYPRVVTQPEINDDDKTVKLHINVDAGNRFYVRHIRFEGNDTSKDSVLRREMRQMEGAWLGNDQVEAGKERLNRLGYFETVDVETQRVPGAADLVDVTYKVKERNTGSLNFGIGYGTESGVSFQVGVQQDNWLGTGNTVGINGTKNDYQTYAEFTLMDPYFTVDGVSLGGRIFYNDFKADNADLSGYTNSSYGADGTLGFPINENNSLRVGVGYVHNDLSDMLPQVAMWRYLESVGERPGYDGREGFTTDDFTLNLGWTYNNLDRGFFPTSGVKSSVNTKITVPGSDNEFYKVTFDTSAYQPLNEDRSWVLLGRGRLGYGDGIGSKEMPFYENFYAGGSSTVRGFRSNNIGPKAAYYANGGATVTNSTDAVGGNAMAVASIELITPTPFISEKYSNSVRTSIFIDSGTVWDTNWENTAKTRAAGIPDYGKASNIRVSAGVALQWMSPLGPLVFSYAKPVKDYEGDKSEQFQFNIGKTW</sequence>
<gene>
    <name evidence="1" type="primary">bamA</name>
    <name type="synonym">yaeT</name>
    <name type="ordered locus">YPK_1074</name>
</gene>
<organism>
    <name type="scientific">Yersinia pseudotuberculosis serotype O:3 (strain YPIII)</name>
    <dbReference type="NCBI Taxonomy" id="502800"/>
    <lineage>
        <taxon>Bacteria</taxon>
        <taxon>Pseudomonadati</taxon>
        <taxon>Pseudomonadota</taxon>
        <taxon>Gammaproteobacteria</taxon>
        <taxon>Enterobacterales</taxon>
        <taxon>Yersiniaceae</taxon>
        <taxon>Yersinia</taxon>
    </lineage>
</organism>
<reference key="1">
    <citation type="submission" date="2008-02" db="EMBL/GenBank/DDBJ databases">
        <title>Complete sequence of Yersinia pseudotuberculosis YPIII.</title>
        <authorList>
            <consortium name="US DOE Joint Genome Institute"/>
            <person name="Copeland A."/>
            <person name="Lucas S."/>
            <person name="Lapidus A."/>
            <person name="Glavina del Rio T."/>
            <person name="Dalin E."/>
            <person name="Tice H."/>
            <person name="Bruce D."/>
            <person name="Goodwin L."/>
            <person name="Pitluck S."/>
            <person name="Munk A.C."/>
            <person name="Brettin T."/>
            <person name="Detter J.C."/>
            <person name="Han C."/>
            <person name="Tapia R."/>
            <person name="Schmutz J."/>
            <person name="Larimer F."/>
            <person name="Land M."/>
            <person name="Hauser L."/>
            <person name="Challacombe J.F."/>
            <person name="Green L."/>
            <person name="Lindler L.E."/>
            <person name="Nikolich M.P."/>
            <person name="Richardson P."/>
        </authorList>
    </citation>
    <scope>NUCLEOTIDE SEQUENCE [LARGE SCALE GENOMIC DNA]</scope>
    <source>
        <strain>YPIII</strain>
    </source>
</reference>
<evidence type="ECO:0000255" key="1">
    <source>
        <dbReference type="HAMAP-Rule" id="MF_01430"/>
    </source>
</evidence>
<evidence type="ECO:0000255" key="2">
    <source>
        <dbReference type="PROSITE-ProRule" id="PRU01115"/>
    </source>
</evidence>